<comment type="subunit">
    <text evidence="1 4">Homotetramer.</text>
</comment>
<comment type="subcellular location">
    <subcellularLocation>
        <location evidence="5">Cytoplasm</location>
        <location evidence="5">Nucleoid</location>
    </subcellularLocation>
</comment>
<comment type="domain">
    <text evidence="4">The N-terminal 120 residues form an OB-fold.</text>
</comment>
<comment type="PTM">
    <text evidence="3">Phosphorylated on tyrosine residue(s) when expressed in E.coli.</text>
</comment>
<dbReference type="EMBL" id="AL939118">
    <property type="protein sequence ID" value="CAB42735.1"/>
    <property type="molecule type" value="Genomic_DNA"/>
</dbReference>
<dbReference type="PIR" id="T36594">
    <property type="entry name" value="T36594"/>
</dbReference>
<dbReference type="RefSeq" id="NP_628093.1">
    <property type="nucleotide sequence ID" value="NC_003888.3"/>
</dbReference>
<dbReference type="RefSeq" id="WP_011029303.1">
    <property type="nucleotide sequence ID" value="NZ_VNID01000003.1"/>
</dbReference>
<dbReference type="PDB" id="3EIV">
    <property type="method" value="X-ray"/>
    <property type="resolution" value="2.14 A"/>
    <property type="chains" value="A/B/C/D=1-199"/>
</dbReference>
<dbReference type="PDBsum" id="3EIV"/>
<dbReference type="SMR" id="Q9X8U3"/>
<dbReference type="FunCoup" id="Q9X8U3">
    <property type="interactions" value="64"/>
</dbReference>
<dbReference type="STRING" id="100226.gene:17761534"/>
<dbReference type="PaxDb" id="100226-SCO3907"/>
<dbReference type="KEGG" id="sco:SCO3907"/>
<dbReference type="PATRIC" id="fig|100226.15.peg.3981"/>
<dbReference type="eggNOG" id="COG0629">
    <property type="taxonomic scope" value="Bacteria"/>
</dbReference>
<dbReference type="HOGENOM" id="CLU_078758_1_0_11"/>
<dbReference type="InParanoid" id="Q9X8U3"/>
<dbReference type="OrthoDB" id="9809878at2"/>
<dbReference type="PhylomeDB" id="Q9X8U3"/>
<dbReference type="EvolutionaryTrace" id="Q9X8U3"/>
<dbReference type="Proteomes" id="UP000001973">
    <property type="component" value="Chromosome"/>
</dbReference>
<dbReference type="GO" id="GO:0005737">
    <property type="term" value="C:cytoplasm"/>
    <property type="evidence" value="ECO:0007669"/>
    <property type="project" value="UniProtKB-KW"/>
</dbReference>
<dbReference type="GO" id="GO:0009295">
    <property type="term" value="C:nucleoid"/>
    <property type="evidence" value="ECO:0000318"/>
    <property type="project" value="GO_Central"/>
</dbReference>
<dbReference type="GO" id="GO:0008047">
    <property type="term" value="F:enzyme activator activity"/>
    <property type="evidence" value="ECO:0000318"/>
    <property type="project" value="GO_Central"/>
</dbReference>
<dbReference type="GO" id="GO:0003697">
    <property type="term" value="F:single-stranded DNA binding"/>
    <property type="evidence" value="ECO:0000318"/>
    <property type="project" value="GO_Central"/>
</dbReference>
<dbReference type="GO" id="GO:0006260">
    <property type="term" value="P:DNA replication"/>
    <property type="evidence" value="ECO:0000318"/>
    <property type="project" value="GO_Central"/>
</dbReference>
<dbReference type="CDD" id="cd04496">
    <property type="entry name" value="SSB_OBF"/>
    <property type="match status" value="1"/>
</dbReference>
<dbReference type="DisProt" id="DP00854"/>
<dbReference type="FunFam" id="2.40.50.140:FF:000057">
    <property type="entry name" value="Single-stranded DNA-binding protein"/>
    <property type="match status" value="1"/>
</dbReference>
<dbReference type="Gene3D" id="2.40.50.140">
    <property type="entry name" value="Nucleic acid-binding proteins"/>
    <property type="match status" value="1"/>
</dbReference>
<dbReference type="HAMAP" id="MF_00984">
    <property type="entry name" value="SSB"/>
    <property type="match status" value="1"/>
</dbReference>
<dbReference type="InterPro" id="IPR012340">
    <property type="entry name" value="NA-bd_OB-fold"/>
</dbReference>
<dbReference type="InterPro" id="IPR000424">
    <property type="entry name" value="Primosome_PriB/ssb"/>
</dbReference>
<dbReference type="InterPro" id="IPR011344">
    <property type="entry name" value="ssDNA-bd"/>
</dbReference>
<dbReference type="NCBIfam" id="NF005851">
    <property type="entry name" value="PRK07772.1"/>
    <property type="match status" value="1"/>
</dbReference>
<dbReference type="NCBIfam" id="TIGR00621">
    <property type="entry name" value="ssb"/>
    <property type="match status" value="1"/>
</dbReference>
<dbReference type="PANTHER" id="PTHR10302">
    <property type="entry name" value="SINGLE-STRANDED DNA-BINDING PROTEIN"/>
    <property type="match status" value="1"/>
</dbReference>
<dbReference type="PANTHER" id="PTHR10302:SF27">
    <property type="entry name" value="SINGLE-STRANDED DNA-BINDING PROTEIN"/>
    <property type="match status" value="1"/>
</dbReference>
<dbReference type="Pfam" id="PF00436">
    <property type="entry name" value="SSB"/>
    <property type="match status" value="1"/>
</dbReference>
<dbReference type="SUPFAM" id="SSF50249">
    <property type="entry name" value="Nucleic acid-binding proteins"/>
    <property type="match status" value="1"/>
</dbReference>
<dbReference type="PROSITE" id="PS50935">
    <property type="entry name" value="SSB"/>
    <property type="match status" value="1"/>
</dbReference>
<keyword id="KW-0002">3D-structure</keyword>
<keyword id="KW-0963">Cytoplasm</keyword>
<keyword id="KW-0238">DNA-binding</keyword>
<keyword id="KW-0597">Phosphoprotein</keyword>
<keyword id="KW-1185">Reference proteome</keyword>
<name>SSB2_STRCO</name>
<gene>
    <name type="primary">ssb2</name>
    <name type="ordered locus">SCO3907</name>
    <name type="ORF">SCH24.29</name>
</gene>
<organism>
    <name type="scientific">Streptomyces coelicolor (strain ATCC BAA-471 / A3(2) / M145)</name>
    <dbReference type="NCBI Taxonomy" id="100226"/>
    <lineage>
        <taxon>Bacteria</taxon>
        <taxon>Bacillati</taxon>
        <taxon>Actinomycetota</taxon>
        <taxon>Actinomycetes</taxon>
        <taxon>Kitasatosporales</taxon>
        <taxon>Streptomycetaceae</taxon>
        <taxon>Streptomyces</taxon>
        <taxon>Streptomyces albidoflavus group</taxon>
    </lineage>
</organism>
<reference key="1">
    <citation type="journal article" date="2002" name="Nature">
        <title>Complete genome sequence of the model actinomycete Streptomyces coelicolor A3(2).</title>
        <authorList>
            <person name="Bentley S.D."/>
            <person name="Chater K.F."/>
            <person name="Cerdeno-Tarraga A.-M."/>
            <person name="Challis G.L."/>
            <person name="Thomson N.R."/>
            <person name="James K.D."/>
            <person name="Harris D.E."/>
            <person name="Quail M.A."/>
            <person name="Kieser H."/>
            <person name="Harper D."/>
            <person name="Bateman A."/>
            <person name="Brown S."/>
            <person name="Chandra G."/>
            <person name="Chen C.W."/>
            <person name="Collins M."/>
            <person name="Cronin A."/>
            <person name="Fraser A."/>
            <person name="Goble A."/>
            <person name="Hidalgo J."/>
            <person name="Hornsby T."/>
            <person name="Howarth S."/>
            <person name="Huang C.-H."/>
            <person name="Kieser T."/>
            <person name="Larke L."/>
            <person name="Murphy L.D."/>
            <person name="Oliver K."/>
            <person name="O'Neil S."/>
            <person name="Rabbinowitsch E."/>
            <person name="Rajandream M.A."/>
            <person name="Rutherford K.M."/>
            <person name="Rutter S."/>
            <person name="Seeger K."/>
            <person name="Saunders D."/>
            <person name="Sharp S."/>
            <person name="Squares R."/>
            <person name="Squares S."/>
            <person name="Taylor K."/>
            <person name="Warren T."/>
            <person name="Wietzorrek A."/>
            <person name="Woodward J.R."/>
            <person name="Barrell B.G."/>
            <person name="Parkhill J."/>
            <person name="Hopwood D.A."/>
        </authorList>
    </citation>
    <scope>NUCLEOTIDE SEQUENCE [LARGE SCALE GENOMIC DNA]</scope>
    <source>
        <strain>ATCC BAA-471 / A3(2) / M145</strain>
    </source>
</reference>
<reference key="2">
    <citation type="journal article" date="2006" name="Nucleic Acids Res.">
        <title>Bacterial single-stranded DNA-binding proteins are phosphorylated on tyrosine.</title>
        <authorList>
            <person name="Mijakovic I."/>
            <person name="Petranovic D."/>
            <person name="Macek B."/>
            <person name="Cepo T."/>
            <person name="Mann M."/>
            <person name="Davies J."/>
            <person name="Jensen P.R."/>
            <person name="Vujaklija D."/>
        </authorList>
    </citation>
    <scope>PHOSPHORYLATION</scope>
</reference>
<reference key="3">
    <citation type="journal article" date="2013" name="J. Proteomics">
        <title>Proteomic survey of the Streptomyces coelicolor nucleoid.</title>
        <authorList>
            <person name="Bradshaw E."/>
            <person name="Saalbach G."/>
            <person name="McArthur M."/>
        </authorList>
    </citation>
    <scope>IDENTIFICATION BY MASS SPECTROMETRY</scope>
    <scope>SUBCELLULAR LOCATION</scope>
    <source>
        <strain>ATCC BAA-471 / A3(2) / M145</strain>
    </source>
</reference>
<reference evidence="6" key="4">
    <citation type="journal article" date="2009" name="Acta Crystallogr. D">
        <title>Structure of the single-stranded DNA-binding protein from Streptomyces coelicolor.</title>
        <authorList>
            <person name="Stefanic Z."/>
            <person name="Vujaklija D."/>
            <person name="Luic M."/>
        </authorList>
    </citation>
    <scope>X-RAY CRYSTALLOGRAPHY (2.14 ANGSTROMS)</scope>
    <scope>SUBUNIT</scope>
    <scope>DOMAIN</scope>
</reference>
<proteinExistence type="evidence at protein level"/>
<feature type="chain" id="PRO_0000096116" description="Single-stranded DNA-binding protein 2">
    <location>
        <begin position="1"/>
        <end position="199"/>
    </location>
</feature>
<feature type="domain" description="SSB" evidence="1">
    <location>
        <begin position="1"/>
        <end position="110"/>
    </location>
</feature>
<feature type="region of interest" description="Disordered" evidence="2">
    <location>
        <begin position="114"/>
        <end position="199"/>
    </location>
</feature>
<feature type="compositionally biased region" description="Gly residues" evidence="2">
    <location>
        <begin position="123"/>
        <end position="156"/>
    </location>
</feature>
<feature type="compositionally biased region" description="Low complexity" evidence="2">
    <location>
        <begin position="157"/>
        <end position="166"/>
    </location>
</feature>
<feature type="compositionally biased region" description="Gly residues" evidence="2">
    <location>
        <begin position="167"/>
        <end position="193"/>
    </location>
</feature>
<feature type="strand" evidence="7">
    <location>
        <begin position="6"/>
        <end position="15"/>
    </location>
</feature>
<feature type="strand" evidence="7">
    <location>
        <begin position="18"/>
        <end position="21"/>
    </location>
</feature>
<feature type="strand" evidence="7">
    <location>
        <begin position="27"/>
        <end position="35"/>
    </location>
</feature>
<feature type="turn" evidence="7">
    <location>
        <begin position="42"/>
        <end position="45"/>
    </location>
</feature>
<feature type="strand" evidence="7">
    <location>
        <begin position="46"/>
        <end position="48"/>
    </location>
</feature>
<feature type="strand" evidence="7">
    <location>
        <begin position="53"/>
        <end position="60"/>
    </location>
</feature>
<feature type="helix" evidence="7">
    <location>
        <begin position="62"/>
        <end position="70"/>
    </location>
</feature>
<feature type="strand" evidence="7">
    <location>
        <begin position="76"/>
        <end position="86"/>
    </location>
</feature>
<feature type="strand" evidence="7">
    <location>
        <begin position="98"/>
        <end position="109"/>
    </location>
</feature>
<feature type="strand" evidence="7">
    <location>
        <begin position="111"/>
        <end position="119"/>
    </location>
</feature>
<protein>
    <recommendedName>
        <fullName evidence="1">Single-stranded DNA-binding protein 2</fullName>
        <shortName evidence="1">SSB 2</shortName>
    </recommendedName>
</protein>
<accession>Q9X8U3</accession>
<evidence type="ECO:0000255" key="1">
    <source>
        <dbReference type="HAMAP-Rule" id="MF_00984"/>
    </source>
</evidence>
<evidence type="ECO:0000256" key="2">
    <source>
        <dbReference type="SAM" id="MobiDB-lite"/>
    </source>
</evidence>
<evidence type="ECO:0000269" key="3">
    <source>
    </source>
</evidence>
<evidence type="ECO:0000269" key="4">
    <source>
    </source>
</evidence>
<evidence type="ECO:0000305" key="5">
    <source>
    </source>
</evidence>
<evidence type="ECO:0007744" key="6">
    <source>
        <dbReference type="PDB" id="3EIV"/>
    </source>
</evidence>
<evidence type="ECO:0007829" key="7">
    <source>
        <dbReference type="PDB" id="3EIV"/>
    </source>
</evidence>
<sequence length="199" mass="19907">MAGETVITVVGNLVDDPELRFTPSGAAVAKFRVASTPRTFDRQTNEWKDGESLFLTCSVWRQAAENVAESLQRGMRVIVQGRLKQRSYEDREGVKRTVYELDVDEVGASLRSATAKVTKTSGQGRGGQGGYGGGGGGQGGGGWGGGPGGGQQGGGAPADDPWATGGAPAGGQQGGGGQGGGGWGGGSGGGGGYSDEPPF</sequence>